<dbReference type="EMBL" id="CP000868">
    <property type="protein sequence ID" value="ABX16841.1"/>
    <property type="molecule type" value="Genomic_DNA"/>
</dbReference>
<dbReference type="EMBL" id="AP009385">
    <property type="protein sequence ID" value="BAG42051.1"/>
    <property type="molecule type" value="Genomic_DNA"/>
</dbReference>
<dbReference type="RefSeq" id="WP_004198824.1">
    <property type="nucleotide sequence ID" value="NC_010804.1"/>
</dbReference>
<dbReference type="SMR" id="A9ACI3"/>
<dbReference type="STRING" id="395019.BMULJ_00071"/>
<dbReference type="GeneID" id="98107775"/>
<dbReference type="KEGG" id="bmj:BMULJ_00071"/>
<dbReference type="KEGG" id="bmu:Bmul_3157"/>
<dbReference type="eggNOG" id="COG0230">
    <property type="taxonomic scope" value="Bacteria"/>
</dbReference>
<dbReference type="HOGENOM" id="CLU_129938_2_0_4"/>
<dbReference type="Proteomes" id="UP000008815">
    <property type="component" value="Chromosome 1"/>
</dbReference>
<dbReference type="GO" id="GO:1990904">
    <property type="term" value="C:ribonucleoprotein complex"/>
    <property type="evidence" value="ECO:0007669"/>
    <property type="project" value="UniProtKB-KW"/>
</dbReference>
<dbReference type="GO" id="GO:0005840">
    <property type="term" value="C:ribosome"/>
    <property type="evidence" value="ECO:0007669"/>
    <property type="project" value="UniProtKB-KW"/>
</dbReference>
<dbReference type="GO" id="GO:0003735">
    <property type="term" value="F:structural constituent of ribosome"/>
    <property type="evidence" value="ECO:0007669"/>
    <property type="project" value="InterPro"/>
</dbReference>
<dbReference type="GO" id="GO:0006412">
    <property type="term" value="P:translation"/>
    <property type="evidence" value="ECO:0007669"/>
    <property type="project" value="UniProtKB-UniRule"/>
</dbReference>
<dbReference type="FunFam" id="1.10.287.3980:FF:000001">
    <property type="entry name" value="Mitochondrial ribosomal protein L34"/>
    <property type="match status" value="1"/>
</dbReference>
<dbReference type="Gene3D" id="1.10.287.3980">
    <property type="match status" value="1"/>
</dbReference>
<dbReference type="HAMAP" id="MF_00391">
    <property type="entry name" value="Ribosomal_bL34"/>
    <property type="match status" value="1"/>
</dbReference>
<dbReference type="InterPro" id="IPR000271">
    <property type="entry name" value="Ribosomal_bL34"/>
</dbReference>
<dbReference type="InterPro" id="IPR020939">
    <property type="entry name" value="Ribosomal_bL34_CS"/>
</dbReference>
<dbReference type="NCBIfam" id="TIGR01030">
    <property type="entry name" value="rpmH_bact"/>
    <property type="match status" value="1"/>
</dbReference>
<dbReference type="PANTHER" id="PTHR14503:SF4">
    <property type="entry name" value="LARGE RIBOSOMAL SUBUNIT PROTEIN BL34M"/>
    <property type="match status" value="1"/>
</dbReference>
<dbReference type="PANTHER" id="PTHR14503">
    <property type="entry name" value="MITOCHONDRIAL RIBOSOMAL PROTEIN 34 FAMILY MEMBER"/>
    <property type="match status" value="1"/>
</dbReference>
<dbReference type="Pfam" id="PF00468">
    <property type="entry name" value="Ribosomal_L34"/>
    <property type="match status" value="1"/>
</dbReference>
<dbReference type="PROSITE" id="PS00784">
    <property type="entry name" value="RIBOSOMAL_L34"/>
    <property type="match status" value="1"/>
</dbReference>
<protein>
    <recommendedName>
        <fullName evidence="1">Large ribosomal subunit protein bL34</fullName>
    </recommendedName>
    <alternativeName>
        <fullName evidence="2">50S ribosomal protein L34</fullName>
    </alternativeName>
</protein>
<gene>
    <name evidence="1" type="primary">rpmH</name>
    <name type="ordered locus">Bmul_3157</name>
    <name type="ordered locus">BMULJ_00071</name>
</gene>
<accession>A9ACI3</accession>
<feature type="chain" id="PRO_1000196015" description="Large ribosomal subunit protein bL34">
    <location>
        <begin position="1"/>
        <end position="44"/>
    </location>
</feature>
<evidence type="ECO:0000255" key="1">
    <source>
        <dbReference type="HAMAP-Rule" id="MF_00391"/>
    </source>
</evidence>
<evidence type="ECO:0000305" key="2"/>
<sequence>MKRTYQPSVTRRKRTHGFRVRMKTAGGRKVINARRAKGRKRLAI</sequence>
<proteinExistence type="inferred from homology"/>
<reference key="1">
    <citation type="submission" date="2007-10" db="EMBL/GenBank/DDBJ databases">
        <title>Complete sequence of chromosome 1 of Burkholderia multivorans ATCC 17616.</title>
        <authorList>
            <person name="Copeland A."/>
            <person name="Lucas S."/>
            <person name="Lapidus A."/>
            <person name="Barry K."/>
            <person name="Glavina del Rio T."/>
            <person name="Dalin E."/>
            <person name="Tice H."/>
            <person name="Pitluck S."/>
            <person name="Chain P."/>
            <person name="Malfatti S."/>
            <person name="Shin M."/>
            <person name="Vergez L."/>
            <person name="Schmutz J."/>
            <person name="Larimer F."/>
            <person name="Land M."/>
            <person name="Hauser L."/>
            <person name="Kyrpides N."/>
            <person name="Kim E."/>
            <person name="Tiedje J."/>
            <person name="Richardson P."/>
        </authorList>
    </citation>
    <scope>NUCLEOTIDE SEQUENCE [LARGE SCALE GENOMIC DNA]</scope>
    <source>
        <strain>ATCC 17616 / 249</strain>
    </source>
</reference>
<reference key="2">
    <citation type="submission" date="2007-04" db="EMBL/GenBank/DDBJ databases">
        <title>Complete genome sequence of Burkholderia multivorans ATCC 17616.</title>
        <authorList>
            <person name="Ohtsubo Y."/>
            <person name="Yamashita A."/>
            <person name="Kurokawa K."/>
            <person name="Takami H."/>
            <person name="Yuhara S."/>
            <person name="Nishiyama E."/>
            <person name="Endo R."/>
            <person name="Miyazaki R."/>
            <person name="Ono A."/>
            <person name="Yano K."/>
            <person name="Ito M."/>
            <person name="Sota M."/>
            <person name="Yuji N."/>
            <person name="Hattori M."/>
            <person name="Tsuda M."/>
        </authorList>
    </citation>
    <scope>NUCLEOTIDE SEQUENCE [LARGE SCALE GENOMIC DNA]</scope>
    <source>
        <strain>ATCC 17616 / 249</strain>
    </source>
</reference>
<keyword id="KW-1185">Reference proteome</keyword>
<keyword id="KW-0687">Ribonucleoprotein</keyword>
<keyword id="KW-0689">Ribosomal protein</keyword>
<name>RL34_BURM1</name>
<organism>
    <name type="scientific">Burkholderia multivorans (strain ATCC 17616 / 249)</name>
    <dbReference type="NCBI Taxonomy" id="395019"/>
    <lineage>
        <taxon>Bacteria</taxon>
        <taxon>Pseudomonadati</taxon>
        <taxon>Pseudomonadota</taxon>
        <taxon>Betaproteobacteria</taxon>
        <taxon>Burkholderiales</taxon>
        <taxon>Burkholderiaceae</taxon>
        <taxon>Burkholderia</taxon>
        <taxon>Burkholderia cepacia complex</taxon>
    </lineage>
</organism>
<comment type="similarity">
    <text evidence="1">Belongs to the bacterial ribosomal protein bL34 family.</text>
</comment>